<name>PAND1_RHILO</name>
<organism>
    <name type="scientific">Mesorhizobium japonicum (strain LMG 29417 / CECT 9101 / MAFF 303099)</name>
    <name type="common">Mesorhizobium loti (strain MAFF 303099)</name>
    <dbReference type="NCBI Taxonomy" id="266835"/>
    <lineage>
        <taxon>Bacteria</taxon>
        <taxon>Pseudomonadati</taxon>
        <taxon>Pseudomonadota</taxon>
        <taxon>Alphaproteobacteria</taxon>
        <taxon>Hyphomicrobiales</taxon>
        <taxon>Phyllobacteriaceae</taxon>
        <taxon>Mesorhizobium</taxon>
    </lineage>
</organism>
<reference key="1">
    <citation type="submission" date="2000-10" db="EMBL/GenBank/DDBJ databases">
        <title>Biosynthetic operons for biotin and nicotinic acid mononucleotide are present on the acquired symbiosis island of Mesorhizobium sp. strain R7A: the bio operon incudes a novel gene involved in pimeloyl-CoA synthesis.</title>
        <authorList>
            <person name="Sullivan J.T."/>
            <person name="Brown S.D."/>
            <person name="Yocum R."/>
            <person name="Ronson C.W."/>
        </authorList>
    </citation>
    <scope>NUCLEOTIDE SEQUENCE [GENOMIC DNA]</scope>
    <source>
        <strain>R7A</strain>
    </source>
</reference>
<reference key="2">
    <citation type="journal article" date="2000" name="DNA Res.">
        <title>Complete genome structure of the nitrogen-fixing symbiotic bacterium Mesorhizobium loti.</title>
        <authorList>
            <person name="Kaneko T."/>
            <person name="Nakamura Y."/>
            <person name="Sato S."/>
            <person name="Asamizu E."/>
            <person name="Kato T."/>
            <person name="Sasamoto S."/>
            <person name="Watanabe A."/>
            <person name="Idesawa K."/>
            <person name="Ishikawa A."/>
            <person name="Kawashima K."/>
            <person name="Kimura T."/>
            <person name="Kishida Y."/>
            <person name="Kiyokawa C."/>
            <person name="Kohara M."/>
            <person name="Matsumoto M."/>
            <person name="Matsuno A."/>
            <person name="Mochizuki Y."/>
            <person name="Nakayama S."/>
            <person name="Nakazaki N."/>
            <person name="Shimpo S."/>
            <person name="Sugimoto M."/>
            <person name="Takeuchi C."/>
            <person name="Yamada M."/>
            <person name="Tabata S."/>
        </authorList>
    </citation>
    <scope>NUCLEOTIDE SEQUENCE [LARGE SCALE GENOMIC DNA]</scope>
    <source>
        <strain>LMG 29417 / CECT 9101 / MAFF 303099</strain>
    </source>
</reference>
<dbReference type="EC" id="4.1.1.11" evidence="1"/>
<dbReference type="EMBL" id="AF311738">
    <property type="protein sequence ID" value="AAG47796.1"/>
    <property type="molecule type" value="Genomic_DNA"/>
</dbReference>
<dbReference type="EMBL" id="BA000012">
    <property type="protein sequence ID" value="BAB52207.1"/>
    <property type="molecule type" value="Genomic_DNA"/>
</dbReference>
<dbReference type="RefSeq" id="WP_010913542.1">
    <property type="nucleotide sequence ID" value="NC_002678.2"/>
</dbReference>
<dbReference type="SMR" id="Q9EYU1"/>
<dbReference type="KEGG" id="mlo:mll5826"/>
<dbReference type="eggNOG" id="COG0853">
    <property type="taxonomic scope" value="Bacteria"/>
</dbReference>
<dbReference type="HOGENOM" id="CLU_115305_1_0_5"/>
<dbReference type="UniPathway" id="UPA00028">
    <property type="reaction ID" value="UER00002"/>
</dbReference>
<dbReference type="Proteomes" id="UP000000552">
    <property type="component" value="Chromosome"/>
</dbReference>
<dbReference type="GO" id="GO:0005829">
    <property type="term" value="C:cytosol"/>
    <property type="evidence" value="ECO:0007669"/>
    <property type="project" value="TreeGrafter"/>
</dbReference>
<dbReference type="GO" id="GO:0004068">
    <property type="term" value="F:aspartate 1-decarboxylase activity"/>
    <property type="evidence" value="ECO:0007669"/>
    <property type="project" value="UniProtKB-UniRule"/>
</dbReference>
<dbReference type="GO" id="GO:0006523">
    <property type="term" value="P:alanine biosynthetic process"/>
    <property type="evidence" value="ECO:0007669"/>
    <property type="project" value="InterPro"/>
</dbReference>
<dbReference type="GO" id="GO:0015940">
    <property type="term" value="P:pantothenate biosynthetic process"/>
    <property type="evidence" value="ECO:0007669"/>
    <property type="project" value="UniProtKB-UniRule"/>
</dbReference>
<dbReference type="CDD" id="cd06919">
    <property type="entry name" value="Asp_decarbox"/>
    <property type="match status" value="1"/>
</dbReference>
<dbReference type="Gene3D" id="2.40.40.20">
    <property type="match status" value="1"/>
</dbReference>
<dbReference type="HAMAP" id="MF_00446">
    <property type="entry name" value="PanD"/>
    <property type="match status" value="1"/>
</dbReference>
<dbReference type="InterPro" id="IPR009010">
    <property type="entry name" value="Asp_de-COase-like_dom_sf"/>
</dbReference>
<dbReference type="InterPro" id="IPR003190">
    <property type="entry name" value="Asp_decarbox"/>
</dbReference>
<dbReference type="NCBIfam" id="TIGR00223">
    <property type="entry name" value="panD"/>
    <property type="match status" value="1"/>
</dbReference>
<dbReference type="PANTHER" id="PTHR21012">
    <property type="entry name" value="ASPARTATE 1-DECARBOXYLASE"/>
    <property type="match status" value="1"/>
</dbReference>
<dbReference type="PANTHER" id="PTHR21012:SF0">
    <property type="entry name" value="ASPARTATE 1-DECARBOXYLASE"/>
    <property type="match status" value="1"/>
</dbReference>
<dbReference type="Pfam" id="PF02261">
    <property type="entry name" value="Asp_decarbox"/>
    <property type="match status" value="1"/>
</dbReference>
<dbReference type="SUPFAM" id="SSF50692">
    <property type="entry name" value="ADC-like"/>
    <property type="match status" value="1"/>
</dbReference>
<protein>
    <recommendedName>
        <fullName evidence="1">Aspartate 1-decarboxylase 1</fullName>
        <ecNumber evidence="1">4.1.1.11</ecNumber>
    </recommendedName>
    <alternativeName>
        <fullName evidence="1">Aspartate alpha-decarboxylase 1</fullName>
    </alternativeName>
    <component>
        <recommendedName>
            <fullName evidence="1">Aspartate 1-decarboxylase beta chain</fullName>
        </recommendedName>
    </component>
    <component>
        <recommendedName>
            <fullName evidence="1">Aspartate 1-decarboxylase alpha chain</fullName>
        </recommendedName>
    </component>
</protein>
<keyword id="KW-0068">Autocatalytic cleavage</keyword>
<keyword id="KW-0963">Cytoplasm</keyword>
<keyword id="KW-0210">Decarboxylase</keyword>
<keyword id="KW-0456">Lyase</keyword>
<keyword id="KW-0566">Pantothenate biosynthesis</keyword>
<keyword id="KW-0670">Pyruvate</keyword>
<keyword id="KW-0704">Schiff base</keyword>
<keyword id="KW-0865">Zymogen</keyword>
<comment type="function">
    <text evidence="1">Catalyzes the pyruvoyl-dependent decarboxylation of aspartate to produce beta-alanine.</text>
</comment>
<comment type="catalytic activity">
    <reaction evidence="1">
        <text>L-aspartate + H(+) = beta-alanine + CO2</text>
        <dbReference type="Rhea" id="RHEA:19497"/>
        <dbReference type="ChEBI" id="CHEBI:15378"/>
        <dbReference type="ChEBI" id="CHEBI:16526"/>
        <dbReference type="ChEBI" id="CHEBI:29991"/>
        <dbReference type="ChEBI" id="CHEBI:57966"/>
        <dbReference type="EC" id="4.1.1.11"/>
    </reaction>
</comment>
<comment type="cofactor">
    <cofactor evidence="1">
        <name>pyruvate</name>
        <dbReference type="ChEBI" id="CHEBI:15361"/>
    </cofactor>
    <text evidence="1">Binds 1 pyruvoyl group covalently per subunit.</text>
</comment>
<comment type="pathway">
    <text evidence="1">Cofactor biosynthesis; (R)-pantothenate biosynthesis; beta-alanine from L-aspartate: step 1/1.</text>
</comment>
<comment type="subunit">
    <text evidence="1">Heterooctamer of four alpha and four beta subunits.</text>
</comment>
<comment type="subcellular location">
    <subcellularLocation>
        <location evidence="1">Cytoplasm</location>
    </subcellularLocation>
</comment>
<comment type="PTM">
    <text evidence="1">Is synthesized initially as an inactive proenzyme, which is activated by self-cleavage at a specific serine bond to produce a beta-subunit with a hydroxyl group at its C-terminus and an alpha-subunit with a pyruvoyl group at its N-terminus.</text>
</comment>
<comment type="similarity">
    <text evidence="1">Belongs to the PanD family.</text>
</comment>
<feature type="chain" id="PRO_0000023143" description="Aspartate 1-decarboxylase beta chain" evidence="1">
    <location>
        <begin position="1"/>
        <end position="23"/>
    </location>
</feature>
<feature type="chain" id="PRO_0000023144" description="Aspartate 1-decarboxylase alpha chain" evidence="1">
    <location>
        <begin position="24"/>
        <end position="150"/>
    </location>
</feature>
<feature type="active site" description="Schiff-base intermediate with substrate; via pyruvic acid" evidence="1">
    <location>
        <position position="24"/>
    </location>
</feature>
<feature type="active site" description="Proton donor" evidence="1">
    <location>
        <position position="57"/>
    </location>
</feature>
<feature type="binding site" evidence="1">
    <location>
        <position position="56"/>
    </location>
    <ligand>
        <name>substrate</name>
    </ligand>
</feature>
<feature type="binding site" evidence="1">
    <location>
        <begin position="72"/>
        <end position="74"/>
    </location>
    <ligand>
        <name>substrate</name>
    </ligand>
</feature>
<feature type="modified residue" description="Pyruvic acid (Ser)" evidence="1">
    <location>
        <position position="24"/>
    </location>
</feature>
<feature type="sequence conflict" description="In Ref. 1; AAG47796." evidence="2" ref="1">
    <original>H</original>
    <variation>Y</variation>
    <location>
        <position position="112"/>
    </location>
</feature>
<feature type="sequence conflict" description="In Ref. 1; AAG47796." evidence="2" ref="1">
    <original>I</original>
    <variation>L</variation>
    <location>
        <position position="123"/>
    </location>
</feature>
<feature type="sequence conflict" description="In Ref. 1; AAG47796." evidence="2" ref="1">
    <original>A</original>
    <variation>S</variation>
    <location>
        <position position="132"/>
    </location>
</feature>
<feature type="sequence conflict" description="In Ref. 1; AAG47796." evidence="2" ref="1">
    <original>DEPLV</original>
    <variation>NEALA</variation>
    <location>
        <begin position="138"/>
        <end position="142"/>
    </location>
</feature>
<sequence>MRKLVAGKLHGIHVTEANLNYHGSITLDPDHCEAAGILPMEFVEIWNKNSGARISTYVILGERGSRCCILNGAAARTCQPDDPIIVCNSIYLDEAHITSLKPRIVTFDQDNHILDRLSYSVDIDTDGRYSFAILDEADEPLVIPALVSGA</sequence>
<accession>Q9EYU1</accession>
<accession>Q98AW5</accession>
<gene>
    <name evidence="1" type="primary">panD1</name>
    <name type="synonym">panD</name>
    <name type="ordered locus">mll5826</name>
</gene>
<proteinExistence type="inferred from homology"/>
<evidence type="ECO:0000255" key="1">
    <source>
        <dbReference type="HAMAP-Rule" id="MF_00446"/>
    </source>
</evidence>
<evidence type="ECO:0000305" key="2"/>